<evidence type="ECO:0000255" key="1">
    <source>
        <dbReference type="HAMAP-Rule" id="MF_00222"/>
    </source>
</evidence>
<evidence type="ECO:0000305" key="2"/>
<sequence>MDDKSMARGRKAFVTGFPIRHSRSPLIHGFWLKELGIDGSYEAVEVKPEDFSSFAASLAANGFAGGNVTIPHKEAAYAAAESLDEAARAIGAVNTLWLENGRLCGGNTDAYGFAANLDASAPGWDKADRALVLGAGGASRAVVHALLSRGVCHVSVVNRTLSRAEELAAHFGARVYAHSWDEAQALVSNAGLIVNTTALGMSGHGEGQDFPIDLTCAPKEAVATDIVYVPLRTAFLNKAEKAGLKTVDGLGMLLHQAVPGFERWFGQRPQVTQALREHILADMAKAGAL</sequence>
<protein>
    <recommendedName>
        <fullName evidence="1">Shikimate dehydrogenase (NADP(+))</fullName>
        <shortName evidence="1">SDH</shortName>
        <ecNumber evidence="1">1.1.1.25</ecNumber>
    </recommendedName>
</protein>
<name>AROE_BRUA2</name>
<reference key="1">
    <citation type="journal article" date="2005" name="Infect. Immun.">
        <title>Whole-genome analyses of speciation events in pathogenic Brucellae.</title>
        <authorList>
            <person name="Chain P.S."/>
            <person name="Comerci D.J."/>
            <person name="Tolmasky M.E."/>
            <person name="Larimer F.W."/>
            <person name="Malfatti S.A."/>
            <person name="Vergez L.M."/>
            <person name="Aguero F."/>
            <person name="Land M.L."/>
            <person name="Ugalde R.A."/>
            <person name="Garcia E."/>
        </authorList>
    </citation>
    <scope>NUCLEOTIDE SEQUENCE [LARGE SCALE GENOMIC DNA]</scope>
    <source>
        <strain>2308</strain>
    </source>
</reference>
<organism>
    <name type="scientific">Brucella abortus (strain 2308)</name>
    <dbReference type="NCBI Taxonomy" id="359391"/>
    <lineage>
        <taxon>Bacteria</taxon>
        <taxon>Pseudomonadati</taxon>
        <taxon>Pseudomonadota</taxon>
        <taxon>Alphaproteobacteria</taxon>
        <taxon>Hyphomicrobiales</taxon>
        <taxon>Brucellaceae</taxon>
        <taxon>Brucella/Ochrobactrum group</taxon>
        <taxon>Brucella</taxon>
    </lineage>
</organism>
<keyword id="KW-0028">Amino-acid biosynthesis</keyword>
<keyword id="KW-0057">Aromatic amino acid biosynthesis</keyword>
<keyword id="KW-0521">NADP</keyword>
<keyword id="KW-0560">Oxidoreductase</keyword>
<keyword id="KW-1185">Reference proteome</keyword>
<proteinExistence type="inferred from homology"/>
<dbReference type="EC" id="1.1.1.25" evidence="1"/>
<dbReference type="EMBL" id="AM040264">
    <property type="protein sequence ID" value="CAJ12026.1"/>
    <property type="status" value="ALT_INIT"/>
    <property type="molecule type" value="Genomic_DNA"/>
</dbReference>
<dbReference type="RefSeq" id="WP_002967030.1">
    <property type="nucleotide sequence ID" value="NZ_KN046823.1"/>
</dbReference>
<dbReference type="SMR" id="Q2YR04"/>
<dbReference type="STRING" id="359391.BAB1_2070"/>
<dbReference type="KEGG" id="bmf:BAB1_2070"/>
<dbReference type="HOGENOM" id="CLU_044063_2_0_5"/>
<dbReference type="PhylomeDB" id="Q2YR04"/>
<dbReference type="UniPathway" id="UPA00053">
    <property type="reaction ID" value="UER00087"/>
</dbReference>
<dbReference type="Proteomes" id="UP000002719">
    <property type="component" value="Chromosome I"/>
</dbReference>
<dbReference type="GO" id="GO:0005829">
    <property type="term" value="C:cytosol"/>
    <property type="evidence" value="ECO:0007669"/>
    <property type="project" value="TreeGrafter"/>
</dbReference>
<dbReference type="GO" id="GO:0050661">
    <property type="term" value="F:NADP binding"/>
    <property type="evidence" value="ECO:0007669"/>
    <property type="project" value="InterPro"/>
</dbReference>
<dbReference type="GO" id="GO:0004764">
    <property type="term" value="F:shikimate 3-dehydrogenase (NADP+) activity"/>
    <property type="evidence" value="ECO:0007669"/>
    <property type="project" value="UniProtKB-UniRule"/>
</dbReference>
<dbReference type="GO" id="GO:0008652">
    <property type="term" value="P:amino acid biosynthetic process"/>
    <property type="evidence" value="ECO:0007669"/>
    <property type="project" value="UniProtKB-KW"/>
</dbReference>
<dbReference type="GO" id="GO:0009073">
    <property type="term" value="P:aromatic amino acid family biosynthetic process"/>
    <property type="evidence" value="ECO:0007669"/>
    <property type="project" value="UniProtKB-KW"/>
</dbReference>
<dbReference type="GO" id="GO:0009423">
    <property type="term" value="P:chorismate biosynthetic process"/>
    <property type="evidence" value="ECO:0007669"/>
    <property type="project" value="UniProtKB-UniRule"/>
</dbReference>
<dbReference type="GO" id="GO:0019632">
    <property type="term" value="P:shikimate metabolic process"/>
    <property type="evidence" value="ECO:0007669"/>
    <property type="project" value="InterPro"/>
</dbReference>
<dbReference type="CDD" id="cd01065">
    <property type="entry name" value="NAD_bind_Shikimate_DH"/>
    <property type="match status" value="1"/>
</dbReference>
<dbReference type="Gene3D" id="3.40.50.10860">
    <property type="entry name" value="Leucine Dehydrogenase, chain A, domain 1"/>
    <property type="match status" value="1"/>
</dbReference>
<dbReference type="Gene3D" id="3.40.50.720">
    <property type="entry name" value="NAD(P)-binding Rossmann-like Domain"/>
    <property type="match status" value="1"/>
</dbReference>
<dbReference type="HAMAP" id="MF_00222">
    <property type="entry name" value="Shikimate_DH_AroE"/>
    <property type="match status" value="1"/>
</dbReference>
<dbReference type="InterPro" id="IPR046346">
    <property type="entry name" value="Aminoacid_DH-like_N_sf"/>
</dbReference>
<dbReference type="InterPro" id="IPR036291">
    <property type="entry name" value="NAD(P)-bd_dom_sf"/>
</dbReference>
<dbReference type="InterPro" id="IPR041121">
    <property type="entry name" value="SDH_C"/>
</dbReference>
<dbReference type="InterPro" id="IPR011342">
    <property type="entry name" value="Shikimate_DH"/>
</dbReference>
<dbReference type="InterPro" id="IPR013708">
    <property type="entry name" value="Shikimate_DH-bd_N"/>
</dbReference>
<dbReference type="InterPro" id="IPR022893">
    <property type="entry name" value="Shikimate_DH_fam"/>
</dbReference>
<dbReference type="InterPro" id="IPR006151">
    <property type="entry name" value="Shikm_DH/Glu-tRNA_Rdtase"/>
</dbReference>
<dbReference type="NCBIfam" id="TIGR00507">
    <property type="entry name" value="aroE"/>
    <property type="match status" value="1"/>
</dbReference>
<dbReference type="NCBIfam" id="NF001312">
    <property type="entry name" value="PRK00258.1-4"/>
    <property type="match status" value="1"/>
</dbReference>
<dbReference type="PANTHER" id="PTHR21089:SF1">
    <property type="entry name" value="BIFUNCTIONAL 3-DEHYDROQUINATE DEHYDRATASE_SHIKIMATE DEHYDROGENASE, CHLOROPLASTIC"/>
    <property type="match status" value="1"/>
</dbReference>
<dbReference type="PANTHER" id="PTHR21089">
    <property type="entry name" value="SHIKIMATE DEHYDROGENASE"/>
    <property type="match status" value="1"/>
</dbReference>
<dbReference type="Pfam" id="PF18317">
    <property type="entry name" value="SDH_C"/>
    <property type="match status" value="1"/>
</dbReference>
<dbReference type="Pfam" id="PF01488">
    <property type="entry name" value="Shikimate_DH"/>
    <property type="match status" value="1"/>
</dbReference>
<dbReference type="Pfam" id="PF08501">
    <property type="entry name" value="Shikimate_dh_N"/>
    <property type="match status" value="1"/>
</dbReference>
<dbReference type="SUPFAM" id="SSF53223">
    <property type="entry name" value="Aminoacid dehydrogenase-like, N-terminal domain"/>
    <property type="match status" value="1"/>
</dbReference>
<dbReference type="SUPFAM" id="SSF51735">
    <property type="entry name" value="NAD(P)-binding Rossmann-fold domains"/>
    <property type="match status" value="1"/>
</dbReference>
<gene>
    <name evidence="1" type="primary">aroE</name>
    <name type="ordered locus">BAB1_2070</name>
</gene>
<feature type="chain" id="PRO_0000325109" description="Shikimate dehydrogenase (NADP(+))">
    <location>
        <begin position="1"/>
        <end position="289"/>
    </location>
</feature>
<feature type="active site" description="Proton acceptor" evidence="1">
    <location>
        <position position="73"/>
    </location>
</feature>
<feature type="binding site" evidence="1">
    <location>
        <begin position="22"/>
        <end position="24"/>
    </location>
    <ligand>
        <name>shikimate</name>
        <dbReference type="ChEBI" id="CHEBI:36208"/>
    </ligand>
</feature>
<feature type="binding site" evidence="1">
    <location>
        <position position="69"/>
    </location>
    <ligand>
        <name>shikimate</name>
        <dbReference type="ChEBI" id="CHEBI:36208"/>
    </ligand>
</feature>
<feature type="binding site" evidence="1">
    <location>
        <position position="85"/>
    </location>
    <ligand>
        <name>NADP(+)</name>
        <dbReference type="ChEBI" id="CHEBI:58349"/>
    </ligand>
</feature>
<feature type="binding site" evidence="1">
    <location>
        <position position="94"/>
    </location>
    <ligand>
        <name>shikimate</name>
        <dbReference type="ChEBI" id="CHEBI:36208"/>
    </ligand>
</feature>
<feature type="binding site" evidence="1">
    <location>
        <position position="109"/>
    </location>
    <ligand>
        <name>shikimate</name>
        <dbReference type="ChEBI" id="CHEBI:36208"/>
    </ligand>
</feature>
<feature type="binding site" evidence="1">
    <location>
        <begin position="134"/>
        <end position="138"/>
    </location>
    <ligand>
        <name>NADP(+)</name>
        <dbReference type="ChEBI" id="CHEBI:58349"/>
    </ligand>
</feature>
<feature type="binding site" evidence="1">
    <location>
        <begin position="158"/>
        <end position="163"/>
    </location>
    <ligand>
        <name>NADP(+)</name>
        <dbReference type="ChEBI" id="CHEBI:58349"/>
    </ligand>
</feature>
<feature type="binding site" evidence="1">
    <location>
        <position position="226"/>
    </location>
    <ligand>
        <name>NADP(+)</name>
        <dbReference type="ChEBI" id="CHEBI:58349"/>
    </ligand>
</feature>
<feature type="binding site" evidence="1">
    <location>
        <position position="228"/>
    </location>
    <ligand>
        <name>shikimate</name>
        <dbReference type="ChEBI" id="CHEBI:36208"/>
    </ligand>
</feature>
<feature type="binding site" evidence="1">
    <location>
        <position position="249"/>
    </location>
    <ligand>
        <name>NADP(+)</name>
        <dbReference type="ChEBI" id="CHEBI:58349"/>
    </ligand>
</feature>
<comment type="function">
    <text evidence="1">Involved in the biosynthesis of the chorismate, which leads to the biosynthesis of aromatic amino acids. Catalyzes the reversible NADPH linked reduction of 3-dehydroshikimate (DHSA) to yield shikimate (SA).</text>
</comment>
<comment type="catalytic activity">
    <reaction evidence="1">
        <text>shikimate + NADP(+) = 3-dehydroshikimate + NADPH + H(+)</text>
        <dbReference type="Rhea" id="RHEA:17737"/>
        <dbReference type="ChEBI" id="CHEBI:15378"/>
        <dbReference type="ChEBI" id="CHEBI:16630"/>
        <dbReference type="ChEBI" id="CHEBI:36208"/>
        <dbReference type="ChEBI" id="CHEBI:57783"/>
        <dbReference type="ChEBI" id="CHEBI:58349"/>
        <dbReference type="EC" id="1.1.1.25"/>
    </reaction>
</comment>
<comment type="pathway">
    <text evidence="1">Metabolic intermediate biosynthesis; chorismate biosynthesis; chorismate from D-erythrose 4-phosphate and phosphoenolpyruvate: step 4/7.</text>
</comment>
<comment type="subunit">
    <text evidence="1">Homodimer.</text>
</comment>
<comment type="similarity">
    <text evidence="1">Belongs to the shikimate dehydrogenase family.</text>
</comment>
<comment type="sequence caution" evidence="2">
    <conflict type="erroneous initiation">
        <sequence resource="EMBL-CDS" id="CAJ12026"/>
    </conflict>
    <text>Truncated N-terminus.</text>
</comment>
<accession>Q2YR04</accession>